<accession>Q9IG44</accession>
<proteinExistence type="predicted"/>
<protein>
    <recommendedName>
        <fullName>Uncharacterized protein ORFC2</fullName>
    </recommendedName>
</protein>
<organismHost>
    <name type="scientific">Columba livia</name>
    <name type="common">Rock dove</name>
    <dbReference type="NCBI Taxonomy" id="8932"/>
</organismHost>
<organism>
    <name type="scientific">Pigeon circovirus</name>
    <name type="common">PiCV</name>
    <name type="synonym">Columbid circovirus</name>
    <dbReference type="NCBI Taxonomy" id="126070"/>
    <lineage>
        <taxon>Viruses</taxon>
        <taxon>Monodnaviria</taxon>
        <taxon>Shotokuvirae</taxon>
        <taxon>Cressdnaviricota</taxon>
        <taxon>Arfiviricetes</taxon>
        <taxon>Cirlivirales</taxon>
        <taxon>Circoviridae</taxon>
        <taxon>Circovirus</taxon>
        <taxon>Circovirus pigeon</taxon>
        <taxon>Pigeon circovirus</taxon>
    </lineage>
</organism>
<reference key="1">
    <citation type="journal article" date="2000" name="Arch. Virol.">
        <title>Cloning and sequencing of columbid circovirus (coCV), a new circovirus from pigeons.</title>
        <authorList>
            <person name="Mankertz A."/>
            <person name="Hattermann K."/>
            <person name="Ehlers B."/>
            <person name="Soike D."/>
        </authorList>
    </citation>
    <scope>NUCLEOTIDE SEQUENCE [GENOMIC DNA]</scope>
</reference>
<dbReference type="EMBL" id="AF252610">
    <property type="protein sequence ID" value="AAF74198.1"/>
    <property type="molecule type" value="Genomic_DNA"/>
</dbReference>
<dbReference type="RefSeq" id="NP_059528.1">
    <property type="nucleotide sequence ID" value="NC_002361.1"/>
</dbReference>
<dbReference type="KEGG" id="vg:1732749"/>
<dbReference type="Proteomes" id="UP000000473">
    <property type="component" value="Genome"/>
</dbReference>
<sequence length="126" mass="13747">MRVPVGHTQQLTEGQPAVEVINDDYFLVVVPVPPFTLHLVEFTSGVVSCPTALPATGRARDDDDFRFEVTGLLTNQQLQVAQATPIFDVYLTEVSRDLGHCSSGFHRGNSLAEIAPVSLRRNAQGK</sequence>
<gene>
    <name type="ORF">ORFC2</name>
</gene>
<feature type="chain" id="PRO_0000319858" description="Uncharacterized protein ORFC2">
    <location>
        <begin position="1"/>
        <end position="126"/>
    </location>
</feature>
<name>ORFC2_PICV</name>